<dbReference type="EMBL" id="AB573712">
    <property type="protein sequence ID" value="BAK54843.1"/>
    <property type="molecule type" value="mRNA"/>
</dbReference>
<dbReference type="RefSeq" id="NP_001257314.1">
    <property type="nucleotide sequence ID" value="NM_001270385.2"/>
</dbReference>
<dbReference type="SMR" id="F8WLE0"/>
<dbReference type="FunCoup" id="F8WLE0">
    <property type="interactions" value="1"/>
</dbReference>
<dbReference type="STRING" id="10116.ENSRNOP00000064972"/>
<dbReference type="PhosphoSitePlus" id="F8WLE0"/>
<dbReference type="PaxDb" id="10116-ENSRNOP00000064972"/>
<dbReference type="Ensembl" id="ENSRNOT00000075426.2">
    <property type="protein sequence ID" value="ENSRNOP00000064972.1"/>
    <property type="gene ID" value="ENSRNOG00000050602.2"/>
</dbReference>
<dbReference type="GeneID" id="289309"/>
<dbReference type="KEGG" id="rno:289309"/>
<dbReference type="AGR" id="RGD:1559696"/>
<dbReference type="CTD" id="383592"/>
<dbReference type="RGD" id="1559696">
    <property type="gene designation" value="Kif28"/>
</dbReference>
<dbReference type="eggNOG" id="KOG0245">
    <property type="taxonomic scope" value="Eukaryota"/>
</dbReference>
<dbReference type="GeneTree" id="ENSGT00940000163104"/>
<dbReference type="HOGENOM" id="CLU_001485_2_3_1"/>
<dbReference type="InParanoid" id="F8WLE0"/>
<dbReference type="OMA" id="HMVITIH"/>
<dbReference type="OrthoDB" id="3176171at2759"/>
<dbReference type="Reactome" id="R-RNO-2132295">
    <property type="pathway name" value="MHC class II antigen presentation"/>
</dbReference>
<dbReference type="Reactome" id="R-RNO-6811434">
    <property type="pathway name" value="COPI-dependent Golgi-to-ER retrograde traffic"/>
</dbReference>
<dbReference type="Reactome" id="R-RNO-983189">
    <property type="pathway name" value="Kinesins"/>
</dbReference>
<dbReference type="PRO" id="PR:F8WLE0"/>
<dbReference type="Proteomes" id="UP000002494">
    <property type="component" value="Chromosome 13"/>
</dbReference>
<dbReference type="GO" id="GO:0005737">
    <property type="term" value="C:cytoplasm"/>
    <property type="evidence" value="ECO:0000318"/>
    <property type="project" value="GO_Central"/>
</dbReference>
<dbReference type="GO" id="GO:0005871">
    <property type="term" value="C:kinesin complex"/>
    <property type="evidence" value="ECO:0000318"/>
    <property type="project" value="GO_Central"/>
</dbReference>
<dbReference type="GO" id="GO:0005874">
    <property type="term" value="C:microtubule"/>
    <property type="evidence" value="ECO:0000318"/>
    <property type="project" value="GO_Central"/>
</dbReference>
<dbReference type="GO" id="GO:0031966">
    <property type="term" value="C:mitochondrial membrane"/>
    <property type="evidence" value="ECO:0000314"/>
    <property type="project" value="UniProtKB"/>
</dbReference>
<dbReference type="GO" id="GO:0005524">
    <property type="term" value="F:ATP binding"/>
    <property type="evidence" value="ECO:0007669"/>
    <property type="project" value="UniProtKB-KW"/>
</dbReference>
<dbReference type="GO" id="GO:0016887">
    <property type="term" value="F:ATP hydrolysis activity"/>
    <property type="evidence" value="ECO:0000318"/>
    <property type="project" value="GO_Central"/>
</dbReference>
<dbReference type="GO" id="GO:0008017">
    <property type="term" value="F:microtubule binding"/>
    <property type="evidence" value="ECO:0000318"/>
    <property type="project" value="GO_Central"/>
</dbReference>
<dbReference type="GO" id="GO:0003777">
    <property type="term" value="F:microtubule motor activity"/>
    <property type="evidence" value="ECO:0000318"/>
    <property type="project" value="GO_Central"/>
</dbReference>
<dbReference type="GO" id="GO:0007005">
    <property type="term" value="P:mitochondrion organization"/>
    <property type="evidence" value="ECO:0000314"/>
    <property type="project" value="UniProtKB"/>
</dbReference>
<dbReference type="GO" id="GO:0072384">
    <property type="term" value="P:organelle transport along microtubule"/>
    <property type="evidence" value="ECO:0000315"/>
    <property type="project" value="UniProtKB"/>
</dbReference>
<dbReference type="GO" id="GO:0047496">
    <property type="term" value="P:vesicle transport along microtubule"/>
    <property type="evidence" value="ECO:0000318"/>
    <property type="project" value="GO_Central"/>
</dbReference>
<dbReference type="CDD" id="cd22709">
    <property type="entry name" value="FHA_KIF28P"/>
    <property type="match status" value="1"/>
</dbReference>
<dbReference type="FunFam" id="3.40.850.10:FF:000063">
    <property type="entry name" value="Kinesin-like protein"/>
    <property type="match status" value="1"/>
</dbReference>
<dbReference type="FunFam" id="2.60.200.20:FF:000034">
    <property type="entry name" value="kinesin-like protein KIF28P"/>
    <property type="match status" value="1"/>
</dbReference>
<dbReference type="Gene3D" id="2.60.200.20">
    <property type="match status" value="1"/>
</dbReference>
<dbReference type="Gene3D" id="3.40.850.10">
    <property type="entry name" value="Kinesin motor domain"/>
    <property type="match status" value="1"/>
</dbReference>
<dbReference type="InterPro" id="IPR000253">
    <property type="entry name" value="FHA_dom"/>
</dbReference>
<dbReference type="InterPro" id="IPR022140">
    <property type="entry name" value="Kinesin-like_KIF1-typ"/>
</dbReference>
<dbReference type="InterPro" id="IPR019821">
    <property type="entry name" value="Kinesin_motor_CS"/>
</dbReference>
<dbReference type="InterPro" id="IPR001752">
    <property type="entry name" value="Kinesin_motor_dom"/>
</dbReference>
<dbReference type="InterPro" id="IPR036961">
    <property type="entry name" value="Kinesin_motor_dom_sf"/>
</dbReference>
<dbReference type="InterPro" id="IPR027417">
    <property type="entry name" value="P-loop_NTPase"/>
</dbReference>
<dbReference type="InterPro" id="IPR008984">
    <property type="entry name" value="SMAD_FHA_dom_sf"/>
</dbReference>
<dbReference type="PANTHER" id="PTHR47117">
    <property type="entry name" value="STAR-RELATED LIPID TRANSFER PROTEIN 9"/>
    <property type="match status" value="1"/>
</dbReference>
<dbReference type="Pfam" id="PF00498">
    <property type="entry name" value="FHA"/>
    <property type="match status" value="1"/>
</dbReference>
<dbReference type="Pfam" id="PF12423">
    <property type="entry name" value="KIF1B"/>
    <property type="match status" value="1"/>
</dbReference>
<dbReference type="Pfam" id="PF00225">
    <property type="entry name" value="Kinesin"/>
    <property type="match status" value="1"/>
</dbReference>
<dbReference type="PRINTS" id="PR00380">
    <property type="entry name" value="KINESINHEAVY"/>
</dbReference>
<dbReference type="SMART" id="SM00129">
    <property type="entry name" value="KISc"/>
    <property type="match status" value="1"/>
</dbReference>
<dbReference type="SUPFAM" id="SSF52540">
    <property type="entry name" value="P-loop containing nucleoside triphosphate hydrolases"/>
    <property type="match status" value="1"/>
</dbReference>
<dbReference type="SUPFAM" id="SSF49879">
    <property type="entry name" value="SMAD/FHA domain"/>
    <property type="match status" value="1"/>
</dbReference>
<dbReference type="PROSITE" id="PS00411">
    <property type="entry name" value="KINESIN_MOTOR_1"/>
    <property type="match status" value="1"/>
</dbReference>
<dbReference type="PROSITE" id="PS50067">
    <property type="entry name" value="KINESIN_MOTOR_2"/>
    <property type="match status" value="1"/>
</dbReference>
<protein>
    <recommendedName>
        <fullName>Kinesin-like protein KIF28</fullName>
    </recommendedName>
    <alternativeName>
        <fullName evidence="4">Kinesin family member 28</fullName>
    </alternativeName>
    <alternativeName>
        <fullName>Kinesin-like protein 6</fullName>
    </alternativeName>
</protein>
<keyword id="KW-0067">ATP-binding</keyword>
<keyword id="KW-0175">Coiled coil</keyword>
<keyword id="KW-0472">Membrane</keyword>
<keyword id="KW-0496">Mitochondrion</keyword>
<keyword id="KW-0505">Motor protein</keyword>
<keyword id="KW-0547">Nucleotide-binding</keyword>
<keyword id="KW-1185">Reference proteome</keyword>
<keyword id="KW-0813">Transport</keyword>
<name>KIF28_RAT</name>
<reference key="1">
    <citation type="journal article" date="2011" name="J. Cell Sci.">
        <title>KLP6: a newly identified kinesin that regulates the morphology and transport of mitochondria in neuronal cells.</title>
        <authorList>
            <person name="Tanaka K."/>
            <person name="Sugiura Y."/>
            <person name="Ichishita R."/>
            <person name="Mihara K."/>
            <person name="Oka T."/>
        </authorList>
    </citation>
    <scope>NUCLEOTIDE SEQUENCE [MRNA]</scope>
    <scope>FUNCTION</scope>
    <scope>SUBCELLULAR LOCATION</scope>
</reference>
<accession>F8WLE0</accession>
<gene>
    <name evidence="4" type="primary">Kif28</name>
    <name type="synonym">Klp6</name>
</gene>
<evidence type="ECO:0000255" key="1"/>
<evidence type="ECO:0000255" key="2">
    <source>
        <dbReference type="PROSITE-ProRule" id="PRU00283"/>
    </source>
</evidence>
<evidence type="ECO:0000269" key="3">
    <source>
    </source>
</evidence>
<evidence type="ECO:0000312" key="4">
    <source>
        <dbReference type="RGD" id="1559696"/>
    </source>
</evidence>
<comment type="function">
    <text evidence="3">Microtubule-dependent motor protein required for mitochondrion morphology and transport of mitochondria in neuronal cells.</text>
</comment>
<comment type="subcellular location">
    <subcellularLocation>
        <location evidence="3">Mitochondrion membrane</location>
        <topology evidence="3">Peripheral membrane protein</topology>
    </subcellularLocation>
</comment>
<comment type="similarity">
    <text evidence="2">Belongs to the TRAFAC class myosin-kinesin ATPase superfamily. Kinesin family.</text>
</comment>
<sequence>MDCEKMGKLPVPRTDSVRVAVRVRPFSQREKNSGSQCVISMHARSITIRDPKDAELVKTFTFDLAYWSHDGFQKDEDGVLIPSDPTSKFAGQSDVFHDIGRGILDSAWQGYNATLLAYGQTGSGKSYSMIGYGANKGIIPRVCEELFQAIEKQKESLEAQVMFSMLEIYNEQIRDLLSRTKAPGGLRVREDQRLGFFVEGLKWVPCEDSVQIEKLVEQGSKIRMTASTNMNASSSRSHMLIAIRFKQVFLDTALTKQSSINMVDLAGSERQRSSGSEGDRLREGSRVNLSLTNLGNVISALADLAMGKKVLHIPYRDSVLTKLLQSALGGNSRTTLIAALSPADICYEETLSTLRYAERAKKVRNRAVINTCPLVRASRAENALLLGFGGAGAAEHSACFWAEQQLGTWGTWAQLLEQARREWEQQYMALAQEQQMVKILPHLLNVNEDPQLTGVLKFFIHNGSCEVGRAASNAICLQSLGISDKHASFTNMDGKVTVAPHITGKVIVNGVPVSSRTKLQHLDRIILGSNSAFLYIGFPSERGAEDLGRFDYDFFQMERAAAEGVSVDMLGTASPGDDQADPSILAVFQDYIKLMPLVVEANQMSEELKKGLKMELKVKNLASSDSRGCDLQKEVMVKVTKQGTHEVWIWSKAKFINRKFLMEELYQRFLESRDSHVAQEDDPFWDPVEVLHLGSAHVWLQSLAHRMMLEEQVEFLNCEGLEEAVLHIQITPCSPEGWAHGEEDTVIDPLELLGKRIDFQIHIVQCLGVKWLKEDATRGIQLGYKVYDLPNTLYTKPVWQSVNPRVEESVHFAALGVSREFLNYLLTNALVVDLWGLQEGCAHLGVSQPDVLFTGEGYIMVDTKTFSSVKDITSNQVPELYQKLLKLEQETELLRDINRALRGENVYLKAALENAGSAPQGERRYHKPDNPEGATVTAAGEAKQMCAQRASSDSQLARALKVFYGGMSVARGQLLRLRQCRPPEDDQMLRPFVHQQSQMLKDLEDLLESSLQKLKSDVAFIVKKKKEYLLPRGR</sequence>
<organism>
    <name type="scientific">Rattus norvegicus</name>
    <name type="common">Rat</name>
    <dbReference type="NCBI Taxonomy" id="10116"/>
    <lineage>
        <taxon>Eukaryota</taxon>
        <taxon>Metazoa</taxon>
        <taxon>Chordata</taxon>
        <taxon>Craniata</taxon>
        <taxon>Vertebrata</taxon>
        <taxon>Euteleostomi</taxon>
        <taxon>Mammalia</taxon>
        <taxon>Eutheria</taxon>
        <taxon>Euarchontoglires</taxon>
        <taxon>Glires</taxon>
        <taxon>Rodentia</taxon>
        <taxon>Myomorpha</taxon>
        <taxon>Muroidea</taxon>
        <taxon>Muridae</taxon>
        <taxon>Murinae</taxon>
        <taxon>Rattus</taxon>
    </lineage>
</organism>
<proteinExistence type="evidence at transcript level"/>
<feature type="chain" id="PRO_0000415571" description="Kinesin-like protein KIF28">
    <location>
        <begin position="1"/>
        <end position="1034"/>
    </location>
</feature>
<feature type="domain" description="Kinesin motor" evidence="2">
    <location>
        <begin position="16"/>
        <end position="363"/>
    </location>
</feature>
<feature type="domain" description="FHA">
    <location>
        <begin position="465"/>
        <end position="528"/>
    </location>
</feature>
<feature type="coiled-coil region" evidence="1">
    <location>
        <begin position="875"/>
        <end position="904"/>
    </location>
</feature>
<feature type="coiled-coil region" evidence="1">
    <location>
        <begin position="994"/>
        <end position="1027"/>
    </location>
</feature>
<feature type="binding site" evidence="2">
    <location>
        <begin position="119"/>
        <end position="126"/>
    </location>
    <ligand>
        <name>ATP</name>
        <dbReference type="ChEBI" id="CHEBI:30616"/>
    </ligand>
</feature>